<proteinExistence type="inferred from homology"/>
<gene>
    <name evidence="1" type="primary">trpD</name>
    <name type="ordered locus">RSKD131_0303</name>
</gene>
<name>TRPD_CERSK</name>
<organism>
    <name type="scientific">Cereibacter sphaeroides (strain KD131 / KCTC 12085)</name>
    <name type="common">Rhodobacter sphaeroides</name>
    <dbReference type="NCBI Taxonomy" id="557760"/>
    <lineage>
        <taxon>Bacteria</taxon>
        <taxon>Pseudomonadati</taxon>
        <taxon>Pseudomonadota</taxon>
        <taxon>Alphaproteobacteria</taxon>
        <taxon>Rhodobacterales</taxon>
        <taxon>Paracoccaceae</taxon>
        <taxon>Cereibacter</taxon>
    </lineage>
</organism>
<evidence type="ECO:0000255" key="1">
    <source>
        <dbReference type="HAMAP-Rule" id="MF_00211"/>
    </source>
</evidence>
<dbReference type="EC" id="2.4.2.18" evidence="1"/>
<dbReference type="EMBL" id="CP001150">
    <property type="protein sequence ID" value="ACM00163.1"/>
    <property type="molecule type" value="Genomic_DNA"/>
</dbReference>
<dbReference type="RefSeq" id="WP_012643619.1">
    <property type="nucleotide sequence ID" value="NC_011963.1"/>
</dbReference>
<dbReference type="SMR" id="B9KMV1"/>
<dbReference type="GeneID" id="67445782"/>
<dbReference type="KEGG" id="rsk:RSKD131_0303"/>
<dbReference type="HOGENOM" id="CLU_034315_2_1_5"/>
<dbReference type="UniPathway" id="UPA00035">
    <property type="reaction ID" value="UER00041"/>
</dbReference>
<dbReference type="GO" id="GO:0005829">
    <property type="term" value="C:cytosol"/>
    <property type="evidence" value="ECO:0007669"/>
    <property type="project" value="TreeGrafter"/>
</dbReference>
<dbReference type="GO" id="GO:0004048">
    <property type="term" value="F:anthranilate phosphoribosyltransferase activity"/>
    <property type="evidence" value="ECO:0007669"/>
    <property type="project" value="UniProtKB-UniRule"/>
</dbReference>
<dbReference type="GO" id="GO:0000287">
    <property type="term" value="F:magnesium ion binding"/>
    <property type="evidence" value="ECO:0007669"/>
    <property type="project" value="UniProtKB-UniRule"/>
</dbReference>
<dbReference type="GO" id="GO:0000162">
    <property type="term" value="P:L-tryptophan biosynthetic process"/>
    <property type="evidence" value="ECO:0007669"/>
    <property type="project" value="UniProtKB-UniRule"/>
</dbReference>
<dbReference type="FunFam" id="3.40.1030.10:FF:000002">
    <property type="entry name" value="Anthranilate phosphoribosyltransferase"/>
    <property type="match status" value="1"/>
</dbReference>
<dbReference type="Gene3D" id="3.40.1030.10">
    <property type="entry name" value="Nucleoside phosphorylase/phosphoribosyltransferase catalytic domain"/>
    <property type="match status" value="1"/>
</dbReference>
<dbReference type="Gene3D" id="1.20.970.10">
    <property type="entry name" value="Transferase, Pyrimidine Nucleoside Phosphorylase, Chain C"/>
    <property type="match status" value="1"/>
</dbReference>
<dbReference type="HAMAP" id="MF_00211">
    <property type="entry name" value="TrpD"/>
    <property type="match status" value="1"/>
</dbReference>
<dbReference type="InterPro" id="IPR005940">
    <property type="entry name" value="Anthranilate_Pribosyl_Tfrase"/>
</dbReference>
<dbReference type="InterPro" id="IPR000312">
    <property type="entry name" value="Glycosyl_Trfase_fam3"/>
</dbReference>
<dbReference type="InterPro" id="IPR017459">
    <property type="entry name" value="Glycosyl_Trfase_fam3_N_dom"/>
</dbReference>
<dbReference type="InterPro" id="IPR036320">
    <property type="entry name" value="Glycosyl_Trfase_fam3_N_dom_sf"/>
</dbReference>
<dbReference type="InterPro" id="IPR035902">
    <property type="entry name" value="Nuc_phospho_transferase"/>
</dbReference>
<dbReference type="NCBIfam" id="TIGR01245">
    <property type="entry name" value="trpD"/>
    <property type="match status" value="1"/>
</dbReference>
<dbReference type="PANTHER" id="PTHR43285">
    <property type="entry name" value="ANTHRANILATE PHOSPHORIBOSYLTRANSFERASE"/>
    <property type="match status" value="1"/>
</dbReference>
<dbReference type="PANTHER" id="PTHR43285:SF2">
    <property type="entry name" value="ANTHRANILATE PHOSPHORIBOSYLTRANSFERASE"/>
    <property type="match status" value="1"/>
</dbReference>
<dbReference type="Pfam" id="PF02885">
    <property type="entry name" value="Glycos_trans_3N"/>
    <property type="match status" value="1"/>
</dbReference>
<dbReference type="Pfam" id="PF00591">
    <property type="entry name" value="Glycos_transf_3"/>
    <property type="match status" value="1"/>
</dbReference>
<dbReference type="SUPFAM" id="SSF52418">
    <property type="entry name" value="Nucleoside phosphorylase/phosphoribosyltransferase catalytic domain"/>
    <property type="match status" value="1"/>
</dbReference>
<dbReference type="SUPFAM" id="SSF47648">
    <property type="entry name" value="Nucleoside phosphorylase/phosphoribosyltransferase N-terminal domain"/>
    <property type="match status" value="1"/>
</dbReference>
<feature type="chain" id="PRO_1000198837" description="Anthranilate phosphoribosyltransferase">
    <location>
        <begin position="1"/>
        <end position="338"/>
    </location>
</feature>
<feature type="binding site" evidence="1">
    <location>
        <position position="81"/>
    </location>
    <ligand>
        <name>5-phospho-alpha-D-ribose 1-diphosphate</name>
        <dbReference type="ChEBI" id="CHEBI:58017"/>
    </ligand>
</feature>
<feature type="binding site" evidence="1">
    <location>
        <position position="81"/>
    </location>
    <ligand>
        <name>anthranilate</name>
        <dbReference type="ChEBI" id="CHEBI:16567"/>
        <label>1</label>
    </ligand>
</feature>
<feature type="binding site" evidence="1">
    <location>
        <begin position="84"/>
        <end position="85"/>
    </location>
    <ligand>
        <name>5-phospho-alpha-D-ribose 1-diphosphate</name>
        <dbReference type="ChEBI" id="CHEBI:58017"/>
    </ligand>
</feature>
<feature type="binding site" evidence="1">
    <location>
        <position position="89"/>
    </location>
    <ligand>
        <name>5-phospho-alpha-D-ribose 1-diphosphate</name>
        <dbReference type="ChEBI" id="CHEBI:58017"/>
    </ligand>
</feature>
<feature type="binding site" evidence="1">
    <location>
        <begin position="91"/>
        <end position="94"/>
    </location>
    <ligand>
        <name>5-phospho-alpha-D-ribose 1-diphosphate</name>
        <dbReference type="ChEBI" id="CHEBI:58017"/>
    </ligand>
</feature>
<feature type="binding site" evidence="1">
    <location>
        <position position="93"/>
    </location>
    <ligand>
        <name>Mg(2+)</name>
        <dbReference type="ChEBI" id="CHEBI:18420"/>
        <label>1</label>
    </ligand>
</feature>
<feature type="binding site" evidence="1">
    <location>
        <begin position="109"/>
        <end position="117"/>
    </location>
    <ligand>
        <name>5-phospho-alpha-D-ribose 1-diphosphate</name>
        <dbReference type="ChEBI" id="CHEBI:58017"/>
    </ligand>
</feature>
<feature type="binding site" evidence="1">
    <location>
        <position position="112"/>
    </location>
    <ligand>
        <name>anthranilate</name>
        <dbReference type="ChEBI" id="CHEBI:16567"/>
        <label>1</label>
    </ligand>
</feature>
<feature type="binding site" evidence="1">
    <location>
        <position position="121"/>
    </location>
    <ligand>
        <name>5-phospho-alpha-D-ribose 1-diphosphate</name>
        <dbReference type="ChEBI" id="CHEBI:58017"/>
    </ligand>
</feature>
<feature type="binding site" evidence="1">
    <location>
        <position position="167"/>
    </location>
    <ligand>
        <name>anthranilate</name>
        <dbReference type="ChEBI" id="CHEBI:16567"/>
        <label>2</label>
    </ligand>
</feature>
<feature type="binding site" evidence="1">
    <location>
        <position position="226"/>
    </location>
    <ligand>
        <name>Mg(2+)</name>
        <dbReference type="ChEBI" id="CHEBI:18420"/>
        <label>2</label>
    </ligand>
</feature>
<feature type="binding site" evidence="1">
    <location>
        <position position="227"/>
    </location>
    <ligand>
        <name>Mg(2+)</name>
        <dbReference type="ChEBI" id="CHEBI:18420"/>
        <label>1</label>
    </ligand>
</feature>
<feature type="binding site" evidence="1">
    <location>
        <position position="227"/>
    </location>
    <ligand>
        <name>Mg(2+)</name>
        <dbReference type="ChEBI" id="CHEBI:18420"/>
        <label>2</label>
    </ligand>
</feature>
<reference key="1">
    <citation type="journal article" date="2009" name="J. Bacteriol.">
        <title>Complete genome sequence of Rhodobacter sphaeroides KD131.</title>
        <authorList>
            <person name="Lim S.-K."/>
            <person name="Kim S.J."/>
            <person name="Cha S.H."/>
            <person name="Oh Y.-K."/>
            <person name="Rhee H.-J."/>
            <person name="Kim M.-S."/>
            <person name="Lee J.K."/>
        </authorList>
    </citation>
    <scope>NUCLEOTIDE SEQUENCE [LARGE SCALE GENOMIC DNA]</scope>
    <source>
        <strain>KD131 / KCTC 12085</strain>
    </source>
</reference>
<keyword id="KW-0028">Amino-acid biosynthesis</keyword>
<keyword id="KW-0057">Aromatic amino acid biosynthesis</keyword>
<keyword id="KW-0328">Glycosyltransferase</keyword>
<keyword id="KW-0460">Magnesium</keyword>
<keyword id="KW-0479">Metal-binding</keyword>
<keyword id="KW-0808">Transferase</keyword>
<keyword id="KW-0822">Tryptophan biosynthesis</keyword>
<protein>
    <recommendedName>
        <fullName evidence="1">Anthranilate phosphoribosyltransferase</fullName>
        <ecNumber evidence="1">2.4.2.18</ecNumber>
    </recommendedName>
</protein>
<accession>B9KMV1</accession>
<sequence>MSDRLKPLIGTAATRPLSREEAEFAFECLFEGEATPAQMGGLLMALRTRGETVDEYAAAASVMRAKCHKVRAPHGAIDIVGTGGDGKGTLNISTATAFVVAGAGVPVAKHGNRNLSSKSGAADALTEMGLNVMIGPEQVEACLLEAGIGFMMAPMHHPAMRHVGPVRAELGTRTIFNILGPLTNPAGVKRQLTGAFSPDLIRPMAEVLSALGSEKAWLVHGGDGTDELAISAASKVAALEGGQIREFELHPEEAGLPVHPFEEIVGGTPAENAQAFHALLDGAPGAYRDAVLLNAAAALVVADRAADLREGVEIATDSILSGAAKAKVALLARLTNAA</sequence>
<comment type="function">
    <text evidence="1">Catalyzes the transfer of the phosphoribosyl group of 5-phosphorylribose-1-pyrophosphate (PRPP) to anthranilate to yield N-(5'-phosphoribosyl)-anthranilate (PRA).</text>
</comment>
<comment type="catalytic activity">
    <reaction evidence="1">
        <text>N-(5-phospho-beta-D-ribosyl)anthranilate + diphosphate = 5-phospho-alpha-D-ribose 1-diphosphate + anthranilate</text>
        <dbReference type="Rhea" id="RHEA:11768"/>
        <dbReference type="ChEBI" id="CHEBI:16567"/>
        <dbReference type="ChEBI" id="CHEBI:18277"/>
        <dbReference type="ChEBI" id="CHEBI:33019"/>
        <dbReference type="ChEBI" id="CHEBI:58017"/>
        <dbReference type="EC" id="2.4.2.18"/>
    </reaction>
</comment>
<comment type="cofactor">
    <cofactor evidence="1">
        <name>Mg(2+)</name>
        <dbReference type="ChEBI" id="CHEBI:18420"/>
    </cofactor>
    <text evidence="1">Binds 2 magnesium ions per monomer.</text>
</comment>
<comment type="pathway">
    <text evidence="1">Amino-acid biosynthesis; L-tryptophan biosynthesis; L-tryptophan from chorismate: step 2/5.</text>
</comment>
<comment type="subunit">
    <text evidence="1">Homodimer.</text>
</comment>
<comment type="similarity">
    <text evidence="1">Belongs to the anthranilate phosphoribosyltransferase family.</text>
</comment>